<name>RL6_ALIB4</name>
<gene>
    <name evidence="1" type="primary">rplF</name>
    <name type="ordered locus">Abu_0767</name>
</gene>
<protein>
    <recommendedName>
        <fullName evidence="1">Large ribosomal subunit protein uL6</fullName>
    </recommendedName>
    <alternativeName>
        <fullName evidence="2">50S ribosomal protein L6</fullName>
    </alternativeName>
</protein>
<feature type="chain" id="PRO_1000067976" description="Large ribosomal subunit protein uL6">
    <location>
        <begin position="1"/>
        <end position="178"/>
    </location>
</feature>
<comment type="function">
    <text evidence="1">This protein binds to the 23S rRNA, and is important in its secondary structure. It is located near the subunit interface in the base of the L7/L12 stalk, and near the tRNA binding site of the peptidyltransferase center.</text>
</comment>
<comment type="subunit">
    <text evidence="1">Part of the 50S ribosomal subunit.</text>
</comment>
<comment type="similarity">
    <text evidence="1">Belongs to the universal ribosomal protein uL6 family.</text>
</comment>
<evidence type="ECO:0000255" key="1">
    <source>
        <dbReference type="HAMAP-Rule" id="MF_01365"/>
    </source>
</evidence>
<evidence type="ECO:0000305" key="2"/>
<proteinExistence type="inferred from homology"/>
<keyword id="KW-1185">Reference proteome</keyword>
<keyword id="KW-0687">Ribonucleoprotein</keyword>
<keyword id="KW-0689">Ribosomal protein</keyword>
<keyword id="KW-0694">RNA-binding</keyword>
<keyword id="KW-0699">rRNA-binding</keyword>
<sequence length="178" mass="19161">MSRIGKKPITIPAGIEVTVNGTLISVKKGNNVSTVETHGRVGIEVANGQVILTRNGDTKESSAFWGTYRALTANAINGLHEGFTKSLEINGVGYRATLKGDILELALGYSHPINYEIPKGLEITVEKNIVSVKGADKQQVGQAAAIIRGFRKPEPYKGKGVKYTDEKIIRKAGKTSKK</sequence>
<accession>A8ESV8</accession>
<reference key="1">
    <citation type="journal article" date="2007" name="PLoS ONE">
        <title>The complete genome sequence and analysis of the Epsilonproteobacterium Arcobacter butzleri.</title>
        <authorList>
            <person name="Miller W.G."/>
            <person name="Parker C.T."/>
            <person name="Rubenfield M."/>
            <person name="Mendz G.L."/>
            <person name="Woesten M.M.S.M."/>
            <person name="Ussery D.W."/>
            <person name="Stolz J.F."/>
            <person name="Binnewies T.T."/>
            <person name="Hallin P.F."/>
            <person name="Wang G."/>
            <person name="Malek J.A."/>
            <person name="Rogosin A."/>
            <person name="Stanker L.H."/>
            <person name="Mandrell R.E."/>
        </authorList>
    </citation>
    <scope>NUCLEOTIDE SEQUENCE [LARGE SCALE GENOMIC DNA]</scope>
    <source>
        <strain>RM4018</strain>
    </source>
</reference>
<dbReference type="EMBL" id="CP000361">
    <property type="protein sequence ID" value="ABV67032.1"/>
    <property type="molecule type" value="Genomic_DNA"/>
</dbReference>
<dbReference type="RefSeq" id="WP_004510835.1">
    <property type="nucleotide sequence ID" value="NC_009850.1"/>
</dbReference>
<dbReference type="SMR" id="A8ESV8"/>
<dbReference type="STRING" id="367737.Abu_0767"/>
<dbReference type="GeneID" id="24304323"/>
<dbReference type="KEGG" id="abu:Abu_0767"/>
<dbReference type="eggNOG" id="COG0097">
    <property type="taxonomic scope" value="Bacteria"/>
</dbReference>
<dbReference type="HOGENOM" id="CLU_065464_1_2_7"/>
<dbReference type="Proteomes" id="UP000001136">
    <property type="component" value="Chromosome"/>
</dbReference>
<dbReference type="GO" id="GO:0022625">
    <property type="term" value="C:cytosolic large ribosomal subunit"/>
    <property type="evidence" value="ECO:0007669"/>
    <property type="project" value="TreeGrafter"/>
</dbReference>
<dbReference type="GO" id="GO:0019843">
    <property type="term" value="F:rRNA binding"/>
    <property type="evidence" value="ECO:0007669"/>
    <property type="project" value="UniProtKB-UniRule"/>
</dbReference>
<dbReference type="GO" id="GO:0003735">
    <property type="term" value="F:structural constituent of ribosome"/>
    <property type="evidence" value="ECO:0007669"/>
    <property type="project" value="InterPro"/>
</dbReference>
<dbReference type="GO" id="GO:0002181">
    <property type="term" value="P:cytoplasmic translation"/>
    <property type="evidence" value="ECO:0007669"/>
    <property type="project" value="TreeGrafter"/>
</dbReference>
<dbReference type="FunFam" id="3.90.930.12:FF:000001">
    <property type="entry name" value="50S ribosomal protein L6"/>
    <property type="match status" value="1"/>
</dbReference>
<dbReference type="Gene3D" id="3.90.930.12">
    <property type="entry name" value="Ribosomal protein L6, alpha-beta domain"/>
    <property type="match status" value="2"/>
</dbReference>
<dbReference type="HAMAP" id="MF_01365_B">
    <property type="entry name" value="Ribosomal_uL6_B"/>
    <property type="match status" value="1"/>
</dbReference>
<dbReference type="InterPro" id="IPR000702">
    <property type="entry name" value="Ribosomal_uL6-like"/>
</dbReference>
<dbReference type="InterPro" id="IPR036789">
    <property type="entry name" value="Ribosomal_uL6-like_a/b-dom_sf"/>
</dbReference>
<dbReference type="InterPro" id="IPR020040">
    <property type="entry name" value="Ribosomal_uL6_a/b-dom"/>
</dbReference>
<dbReference type="InterPro" id="IPR019906">
    <property type="entry name" value="Ribosomal_uL6_bac-type"/>
</dbReference>
<dbReference type="InterPro" id="IPR002358">
    <property type="entry name" value="Ribosomal_uL6_CS"/>
</dbReference>
<dbReference type="NCBIfam" id="TIGR03654">
    <property type="entry name" value="L6_bact"/>
    <property type="match status" value="1"/>
</dbReference>
<dbReference type="PANTHER" id="PTHR11655">
    <property type="entry name" value="60S/50S RIBOSOMAL PROTEIN L6/L9"/>
    <property type="match status" value="1"/>
</dbReference>
<dbReference type="PANTHER" id="PTHR11655:SF14">
    <property type="entry name" value="LARGE RIBOSOMAL SUBUNIT PROTEIN UL6M"/>
    <property type="match status" value="1"/>
</dbReference>
<dbReference type="Pfam" id="PF00347">
    <property type="entry name" value="Ribosomal_L6"/>
    <property type="match status" value="2"/>
</dbReference>
<dbReference type="PIRSF" id="PIRSF002162">
    <property type="entry name" value="Ribosomal_L6"/>
    <property type="match status" value="1"/>
</dbReference>
<dbReference type="PRINTS" id="PR00059">
    <property type="entry name" value="RIBOSOMALL6"/>
</dbReference>
<dbReference type="SUPFAM" id="SSF56053">
    <property type="entry name" value="Ribosomal protein L6"/>
    <property type="match status" value="2"/>
</dbReference>
<dbReference type="PROSITE" id="PS00525">
    <property type="entry name" value="RIBOSOMAL_L6_1"/>
    <property type="match status" value="1"/>
</dbReference>
<organism>
    <name type="scientific">Aliarcobacter butzleri (strain RM4018)</name>
    <name type="common">Arcobacter butzleri</name>
    <dbReference type="NCBI Taxonomy" id="367737"/>
    <lineage>
        <taxon>Bacteria</taxon>
        <taxon>Pseudomonadati</taxon>
        <taxon>Campylobacterota</taxon>
        <taxon>Epsilonproteobacteria</taxon>
        <taxon>Campylobacterales</taxon>
        <taxon>Arcobacteraceae</taxon>
        <taxon>Aliarcobacter</taxon>
    </lineage>
</organism>